<accession>Q5H4Y3</accession>
<comment type="function">
    <text evidence="1">Produces ATP from ADP in the presence of a proton gradient across the membrane.</text>
</comment>
<comment type="subunit">
    <text>F-type ATPases have 2 components, CF(1) - the catalytic core - and CF(0) - the membrane proton channel. CF(1) has five subunits: alpha(3), beta(3), gamma(1), delta(1), epsilon(1). CF(0) has three main subunits: a, b and c.</text>
</comment>
<comment type="subcellular location">
    <subcellularLocation>
        <location evidence="1">Cell inner membrane</location>
        <topology evidence="1">Peripheral membrane protein</topology>
    </subcellularLocation>
</comment>
<comment type="similarity">
    <text evidence="1">Belongs to the ATPase epsilon chain family.</text>
</comment>
<dbReference type="EMBL" id="AE013598">
    <property type="protein sequence ID" value="AAW73987.1"/>
    <property type="molecule type" value="Genomic_DNA"/>
</dbReference>
<dbReference type="SMR" id="Q5H4Y3"/>
<dbReference type="STRING" id="291331.XOO0733"/>
<dbReference type="KEGG" id="xoo:XOO0733"/>
<dbReference type="PATRIC" id="fig|291331.8.peg.819"/>
<dbReference type="HOGENOM" id="CLU_084338_2_0_6"/>
<dbReference type="Proteomes" id="UP000006735">
    <property type="component" value="Chromosome"/>
</dbReference>
<dbReference type="GO" id="GO:0005886">
    <property type="term" value="C:plasma membrane"/>
    <property type="evidence" value="ECO:0007669"/>
    <property type="project" value="UniProtKB-SubCell"/>
</dbReference>
<dbReference type="GO" id="GO:0045259">
    <property type="term" value="C:proton-transporting ATP synthase complex"/>
    <property type="evidence" value="ECO:0007669"/>
    <property type="project" value="UniProtKB-KW"/>
</dbReference>
<dbReference type="GO" id="GO:0005524">
    <property type="term" value="F:ATP binding"/>
    <property type="evidence" value="ECO:0007669"/>
    <property type="project" value="UniProtKB-UniRule"/>
</dbReference>
<dbReference type="GO" id="GO:0046933">
    <property type="term" value="F:proton-transporting ATP synthase activity, rotational mechanism"/>
    <property type="evidence" value="ECO:0007669"/>
    <property type="project" value="UniProtKB-UniRule"/>
</dbReference>
<dbReference type="CDD" id="cd12152">
    <property type="entry name" value="F1-ATPase_delta"/>
    <property type="match status" value="1"/>
</dbReference>
<dbReference type="FunFam" id="2.60.15.10:FF:000001">
    <property type="entry name" value="ATP synthase epsilon chain"/>
    <property type="match status" value="1"/>
</dbReference>
<dbReference type="Gene3D" id="1.20.5.440">
    <property type="entry name" value="ATP synthase delta/epsilon subunit, C-terminal domain"/>
    <property type="match status" value="1"/>
</dbReference>
<dbReference type="Gene3D" id="2.60.15.10">
    <property type="entry name" value="F0F1 ATP synthase delta/epsilon subunit, N-terminal"/>
    <property type="match status" value="1"/>
</dbReference>
<dbReference type="HAMAP" id="MF_00530">
    <property type="entry name" value="ATP_synth_epsil_bac"/>
    <property type="match status" value="1"/>
</dbReference>
<dbReference type="InterPro" id="IPR036794">
    <property type="entry name" value="ATP_F1_dsu/esu_C_sf"/>
</dbReference>
<dbReference type="InterPro" id="IPR001469">
    <property type="entry name" value="ATP_synth_F1_dsu/esu"/>
</dbReference>
<dbReference type="InterPro" id="IPR020546">
    <property type="entry name" value="ATP_synth_F1_dsu/esu_N"/>
</dbReference>
<dbReference type="InterPro" id="IPR020547">
    <property type="entry name" value="ATP_synth_F1_esu_C"/>
</dbReference>
<dbReference type="InterPro" id="IPR036771">
    <property type="entry name" value="ATPsynth_dsu/esu_N"/>
</dbReference>
<dbReference type="NCBIfam" id="TIGR01216">
    <property type="entry name" value="ATP_synt_epsi"/>
    <property type="match status" value="1"/>
</dbReference>
<dbReference type="NCBIfam" id="NF001847">
    <property type="entry name" value="PRK00571.1-4"/>
    <property type="match status" value="1"/>
</dbReference>
<dbReference type="PANTHER" id="PTHR13822">
    <property type="entry name" value="ATP SYNTHASE DELTA/EPSILON CHAIN"/>
    <property type="match status" value="1"/>
</dbReference>
<dbReference type="PANTHER" id="PTHR13822:SF10">
    <property type="entry name" value="ATP SYNTHASE EPSILON CHAIN, CHLOROPLASTIC"/>
    <property type="match status" value="1"/>
</dbReference>
<dbReference type="Pfam" id="PF00401">
    <property type="entry name" value="ATP-synt_DE"/>
    <property type="match status" value="1"/>
</dbReference>
<dbReference type="Pfam" id="PF02823">
    <property type="entry name" value="ATP-synt_DE_N"/>
    <property type="match status" value="1"/>
</dbReference>
<dbReference type="SUPFAM" id="SSF46604">
    <property type="entry name" value="Epsilon subunit of F1F0-ATP synthase C-terminal domain"/>
    <property type="match status" value="1"/>
</dbReference>
<dbReference type="SUPFAM" id="SSF51344">
    <property type="entry name" value="Epsilon subunit of F1F0-ATP synthase N-terminal domain"/>
    <property type="match status" value="1"/>
</dbReference>
<organism>
    <name type="scientific">Xanthomonas oryzae pv. oryzae (strain KACC10331 / KXO85)</name>
    <dbReference type="NCBI Taxonomy" id="291331"/>
    <lineage>
        <taxon>Bacteria</taxon>
        <taxon>Pseudomonadati</taxon>
        <taxon>Pseudomonadota</taxon>
        <taxon>Gammaproteobacteria</taxon>
        <taxon>Lysobacterales</taxon>
        <taxon>Lysobacteraceae</taxon>
        <taxon>Xanthomonas</taxon>
    </lineage>
</organism>
<reference key="1">
    <citation type="journal article" date="2005" name="Nucleic Acids Res.">
        <title>The genome sequence of Xanthomonas oryzae pathovar oryzae KACC10331, the bacterial blight pathogen of rice.</title>
        <authorList>
            <person name="Lee B.-M."/>
            <person name="Park Y.-J."/>
            <person name="Park D.-S."/>
            <person name="Kang H.-W."/>
            <person name="Kim J.-G."/>
            <person name="Song E.-S."/>
            <person name="Park I.-C."/>
            <person name="Yoon U.-H."/>
            <person name="Hahn J.-H."/>
            <person name="Koo B.-S."/>
            <person name="Lee G.-B."/>
            <person name="Kim H."/>
            <person name="Park H.-S."/>
            <person name="Yoon K.-O."/>
            <person name="Kim J.-H."/>
            <person name="Jung C.-H."/>
            <person name="Koh N.-H."/>
            <person name="Seo J.-S."/>
            <person name="Go S.-J."/>
        </authorList>
    </citation>
    <scope>NUCLEOTIDE SEQUENCE [LARGE SCALE GENOMIC DNA]</scope>
    <source>
        <strain>KACC10331 / KXO85</strain>
    </source>
</reference>
<keyword id="KW-0066">ATP synthesis</keyword>
<keyword id="KW-0997">Cell inner membrane</keyword>
<keyword id="KW-1003">Cell membrane</keyword>
<keyword id="KW-0139">CF(1)</keyword>
<keyword id="KW-0375">Hydrogen ion transport</keyword>
<keyword id="KW-0406">Ion transport</keyword>
<keyword id="KW-0472">Membrane</keyword>
<keyword id="KW-1185">Reference proteome</keyword>
<keyword id="KW-0813">Transport</keyword>
<feature type="chain" id="PRO_0000265926" description="ATP synthase epsilon chain">
    <location>
        <begin position="1"/>
        <end position="140"/>
    </location>
</feature>
<proteinExistence type="inferred from homology"/>
<protein>
    <recommendedName>
        <fullName evidence="1">ATP synthase epsilon chain</fullName>
    </recommendedName>
    <alternativeName>
        <fullName evidence="1">ATP synthase F1 sector epsilon subunit</fullName>
    </alternativeName>
    <alternativeName>
        <fullName evidence="1">F-ATPase epsilon subunit</fullName>
    </alternativeName>
</protein>
<gene>
    <name evidence="1" type="primary">atpC</name>
    <name type="ordered locus">XOO0733</name>
</gene>
<name>ATPE_XANOR</name>
<evidence type="ECO:0000255" key="1">
    <source>
        <dbReference type="HAMAP-Rule" id="MF_00530"/>
    </source>
</evidence>
<sequence>MSTIRCDIVSAEKEIFHGEATLVVATGELGELGIAPKHAPLITRLKPGKVVVITANGEHLDFAISGGILEVQPQVVTILVDTAVRAQDIEEAAVRKVKEEAERLLANRGNTVDVAEAQRRLTEATVQLQALERLRRNLKH</sequence>